<organismHost>
    <name type="scientific">Sus scrofa</name>
    <name type="common">Pig</name>
    <dbReference type="NCBI Taxonomy" id="9823"/>
</organismHost>
<protein>
    <recommendedName>
        <fullName>Uncharacterized protein C5</fullName>
    </recommendedName>
</protein>
<dbReference type="EMBL" id="L22013">
    <property type="protein sequence ID" value="AAC37866.1"/>
    <property type="molecule type" value="Genomic_DNA"/>
</dbReference>
<dbReference type="SMR" id="P32227"/>
<dbReference type="KEGG" id="vg:932391"/>
<dbReference type="Gene3D" id="1.10.437.20">
    <property type="entry name" value="dsDNA poxvirus"/>
    <property type="match status" value="1"/>
</dbReference>
<dbReference type="InterPro" id="IPR022819">
    <property type="entry name" value="Poxvirus_Bcl-2-like"/>
</dbReference>
<dbReference type="InterPro" id="IPR043018">
    <property type="entry name" value="Poxvirus_sf"/>
</dbReference>
<dbReference type="Pfam" id="PF06227">
    <property type="entry name" value="Poxv_Bcl-2-like"/>
    <property type="match status" value="1"/>
</dbReference>
<feature type="chain" id="PRO_0000099610" description="Uncharacterized protein C5">
    <location>
        <begin position="1"/>
        <end position="236"/>
    </location>
</feature>
<proteinExistence type="predicted"/>
<gene>
    <name type="ORF">C5L</name>
</gene>
<sequence>MNSYIVIKNSLRDYRSGRIIRKYIRKLNKDEYKHFCAVFRLNVDFSQDDKNPSRKEVIRIIDEEFNFCDLRLFYDIMTVVPNHMNVASIIYSEYEYLLKKSNYKNKKINYTILDKINKYHSIDDIIFMYLHWRKKYNNTCACGKLFKELMKYDILATKYIYNDIINTYKEGDTISINIRLKCKDDIIKHCKSSIGMFAILSSKIIDVDFDVIFFSQISIRYRLIFKKYLIQSLYLQ</sequence>
<reference key="1">
    <citation type="journal article" date="1993" name="Virology">
        <title>DNA sequence analysis of conserved and unique regions of swinepox virus: identification of genetic elements supporting phenotypic observations including a novel G protein-coupled receptor homologue.</title>
        <authorList>
            <person name="Massung R.F."/>
            <person name="Jayarama V."/>
            <person name="Moyer R.W."/>
        </authorList>
    </citation>
    <scope>NUCLEOTIDE SEQUENCE [GENOMIC DNA]</scope>
</reference>
<accession>P32227</accession>
<organism>
    <name type="scientific">Swinepox virus (strain Kasza)</name>
    <name type="common">SWPV</name>
    <dbReference type="NCBI Taxonomy" id="10277"/>
    <lineage>
        <taxon>Viruses</taxon>
        <taxon>Varidnaviria</taxon>
        <taxon>Bamfordvirae</taxon>
        <taxon>Nucleocytoviricota</taxon>
        <taxon>Pokkesviricetes</taxon>
        <taxon>Chitovirales</taxon>
        <taxon>Poxviridae</taxon>
        <taxon>Chordopoxvirinae</taxon>
        <taxon>Suipoxvirus</taxon>
        <taxon>Swinepox virus</taxon>
    </lineage>
</organism>
<name>VC05_SWPVK</name>